<accession>Q9ZD77</accession>
<protein>
    <recommendedName>
        <fullName>Porphobilinogen deaminase</fullName>
        <shortName>PBG</shortName>
        <ecNumber>2.5.1.61</ecNumber>
    </recommendedName>
    <alternativeName>
        <fullName>Hydroxymethylbilane synthase</fullName>
        <shortName>HMBS</shortName>
    </alternativeName>
    <alternativeName>
        <fullName>Pre-uroporphyrinogen synthase</fullName>
    </alternativeName>
</protein>
<proteinExistence type="inferred from homology"/>
<gene>
    <name type="primary">hemC</name>
    <name type="ordered locus">RP466</name>
</gene>
<feature type="chain" id="PRO_0000142982" description="Porphobilinogen deaminase">
    <location>
        <begin position="1"/>
        <end position="299"/>
    </location>
</feature>
<feature type="modified residue" description="S-(dipyrrolylmethanemethyl)cysteine" evidence="1">
    <location>
        <position position="242"/>
    </location>
</feature>
<evidence type="ECO:0000250" key="1"/>
<evidence type="ECO:0000305" key="2"/>
<comment type="function">
    <text evidence="1">Tetrapolymerization of the monopyrrole PBG into the hydroxymethylbilane pre-uroporphyrinogen in several discrete steps.</text>
</comment>
<comment type="catalytic activity">
    <reaction>
        <text>4 porphobilinogen + H2O = hydroxymethylbilane + 4 NH4(+)</text>
        <dbReference type="Rhea" id="RHEA:13185"/>
        <dbReference type="ChEBI" id="CHEBI:15377"/>
        <dbReference type="ChEBI" id="CHEBI:28938"/>
        <dbReference type="ChEBI" id="CHEBI:57845"/>
        <dbReference type="ChEBI" id="CHEBI:58126"/>
        <dbReference type="EC" id="2.5.1.61"/>
    </reaction>
</comment>
<comment type="cofactor">
    <cofactor evidence="1">
        <name>dipyrromethane</name>
        <dbReference type="ChEBI" id="CHEBI:60342"/>
    </cofactor>
    <text evidence="1">Binds 1 dipyrromethane group covalently.</text>
</comment>
<comment type="pathway">
    <text>Porphyrin-containing compound metabolism; protoporphyrin-IX biosynthesis; coproporphyrinogen-III from 5-aminolevulinate: step 2/4.</text>
</comment>
<comment type="subunit">
    <text evidence="1">Monomer.</text>
</comment>
<comment type="miscellaneous">
    <text evidence="1">The porphobilinogen subunits are added to the dipyrromethane group.</text>
</comment>
<comment type="similarity">
    <text evidence="2">Belongs to the HMBS family.</text>
</comment>
<keyword id="KW-0627">Porphyrin biosynthesis</keyword>
<keyword id="KW-1185">Reference proteome</keyword>
<keyword id="KW-0808">Transferase</keyword>
<sequence length="299" mass="33596">MINSIRIGTRNSTLALIQTNLVIEQIKQIFPDINCEIVPIITSGDLIQNKPLYDIGGKALFLKEIEQALLDKKIDLAVHSLKDIPGKIPVELVIAAVLEREDPRDVLVCLNYQSIETLPQNAVIGSSAVRRKAFIKKIRPDLNIKVFRGNVDSRIKKLMTGEVDAIILSYAGLKRLNVFNQKYCHLIEYSKMLPCIGQGVIAVEIRKDDNAMFNICSQINHLPTFELIKPERAFLEYLDANCSTPIAAYAQYLDAYNIQIDFMLGNLDCTKIIFQTEITNIKTSKICGIKAAKMMLAQQ</sequence>
<dbReference type="EC" id="2.5.1.61"/>
<dbReference type="EMBL" id="AJ235271">
    <property type="protein sequence ID" value="CAA14922.1"/>
    <property type="molecule type" value="Genomic_DNA"/>
</dbReference>
<dbReference type="PIR" id="H71705">
    <property type="entry name" value="H71705"/>
</dbReference>
<dbReference type="RefSeq" id="NP_220846.1">
    <property type="nucleotide sequence ID" value="NC_000963.1"/>
</dbReference>
<dbReference type="RefSeq" id="WP_004597702.1">
    <property type="nucleotide sequence ID" value="NC_000963.1"/>
</dbReference>
<dbReference type="SMR" id="Q9ZD77"/>
<dbReference type="STRING" id="272947.gene:17555546"/>
<dbReference type="EnsemblBacteria" id="CAA14922">
    <property type="protein sequence ID" value="CAA14922"/>
    <property type="gene ID" value="CAA14922"/>
</dbReference>
<dbReference type="GeneID" id="57569591"/>
<dbReference type="KEGG" id="rpr:RP466"/>
<dbReference type="PATRIC" id="fig|272947.5.peg.478"/>
<dbReference type="eggNOG" id="COG0181">
    <property type="taxonomic scope" value="Bacteria"/>
</dbReference>
<dbReference type="HOGENOM" id="CLU_019704_0_2_5"/>
<dbReference type="OrthoDB" id="9810298at2"/>
<dbReference type="UniPathway" id="UPA00251">
    <property type="reaction ID" value="UER00319"/>
</dbReference>
<dbReference type="Proteomes" id="UP000002480">
    <property type="component" value="Chromosome"/>
</dbReference>
<dbReference type="GO" id="GO:0005737">
    <property type="term" value="C:cytoplasm"/>
    <property type="evidence" value="ECO:0007669"/>
    <property type="project" value="TreeGrafter"/>
</dbReference>
<dbReference type="GO" id="GO:0004418">
    <property type="term" value="F:hydroxymethylbilane synthase activity"/>
    <property type="evidence" value="ECO:0007669"/>
    <property type="project" value="UniProtKB-UniRule"/>
</dbReference>
<dbReference type="GO" id="GO:0006782">
    <property type="term" value="P:protoporphyrinogen IX biosynthetic process"/>
    <property type="evidence" value="ECO:0007669"/>
    <property type="project" value="UniProtKB-UniRule"/>
</dbReference>
<dbReference type="CDD" id="cd13647">
    <property type="entry name" value="PBP2_PBGD_2"/>
    <property type="match status" value="1"/>
</dbReference>
<dbReference type="FunFam" id="3.40.190.10:FF:000004">
    <property type="entry name" value="Porphobilinogen deaminase"/>
    <property type="match status" value="1"/>
</dbReference>
<dbReference type="FunFam" id="3.40.190.10:FF:000005">
    <property type="entry name" value="Porphobilinogen deaminase"/>
    <property type="match status" value="1"/>
</dbReference>
<dbReference type="Gene3D" id="3.40.190.10">
    <property type="entry name" value="Periplasmic binding protein-like II"/>
    <property type="match status" value="2"/>
</dbReference>
<dbReference type="Gene3D" id="3.30.160.40">
    <property type="entry name" value="Porphobilinogen deaminase, C-terminal domain"/>
    <property type="match status" value="1"/>
</dbReference>
<dbReference type="HAMAP" id="MF_00260">
    <property type="entry name" value="Porphobil_deam"/>
    <property type="match status" value="1"/>
</dbReference>
<dbReference type="InterPro" id="IPR000860">
    <property type="entry name" value="HemC"/>
</dbReference>
<dbReference type="InterPro" id="IPR022419">
    <property type="entry name" value="Porphobilin_deaminase_cofac_BS"/>
</dbReference>
<dbReference type="InterPro" id="IPR022417">
    <property type="entry name" value="Porphobilin_deaminase_N"/>
</dbReference>
<dbReference type="InterPro" id="IPR022418">
    <property type="entry name" value="Porphobilinogen_deaminase_C"/>
</dbReference>
<dbReference type="InterPro" id="IPR036803">
    <property type="entry name" value="Porphobilinogen_deaminase_C_sf"/>
</dbReference>
<dbReference type="NCBIfam" id="TIGR00212">
    <property type="entry name" value="hemC"/>
    <property type="match status" value="1"/>
</dbReference>
<dbReference type="PANTHER" id="PTHR11557">
    <property type="entry name" value="PORPHOBILINOGEN DEAMINASE"/>
    <property type="match status" value="1"/>
</dbReference>
<dbReference type="PANTHER" id="PTHR11557:SF0">
    <property type="entry name" value="PORPHOBILINOGEN DEAMINASE"/>
    <property type="match status" value="1"/>
</dbReference>
<dbReference type="Pfam" id="PF01379">
    <property type="entry name" value="Porphobil_deam"/>
    <property type="match status" value="1"/>
</dbReference>
<dbReference type="Pfam" id="PF03900">
    <property type="entry name" value="Porphobil_deamC"/>
    <property type="match status" value="1"/>
</dbReference>
<dbReference type="PIRSF" id="PIRSF001438">
    <property type="entry name" value="4pyrrol_synth_OHMeBilane_synth"/>
    <property type="match status" value="1"/>
</dbReference>
<dbReference type="PRINTS" id="PR00151">
    <property type="entry name" value="PORPHBDMNASE"/>
</dbReference>
<dbReference type="SUPFAM" id="SSF53850">
    <property type="entry name" value="Periplasmic binding protein-like II"/>
    <property type="match status" value="1"/>
</dbReference>
<dbReference type="SUPFAM" id="SSF54782">
    <property type="entry name" value="Porphobilinogen deaminase (hydroxymethylbilane synthase), C-terminal domain"/>
    <property type="match status" value="1"/>
</dbReference>
<dbReference type="PROSITE" id="PS00533">
    <property type="entry name" value="PORPHOBILINOGEN_DEAM"/>
    <property type="match status" value="1"/>
</dbReference>
<organism>
    <name type="scientific">Rickettsia prowazekii (strain Madrid E)</name>
    <dbReference type="NCBI Taxonomy" id="272947"/>
    <lineage>
        <taxon>Bacteria</taxon>
        <taxon>Pseudomonadati</taxon>
        <taxon>Pseudomonadota</taxon>
        <taxon>Alphaproteobacteria</taxon>
        <taxon>Rickettsiales</taxon>
        <taxon>Rickettsiaceae</taxon>
        <taxon>Rickettsieae</taxon>
        <taxon>Rickettsia</taxon>
        <taxon>typhus group</taxon>
    </lineage>
</organism>
<name>HEM3_RICPR</name>
<reference key="1">
    <citation type="journal article" date="1998" name="Nature">
        <title>The genome sequence of Rickettsia prowazekii and the origin of mitochondria.</title>
        <authorList>
            <person name="Andersson S.G.E."/>
            <person name="Zomorodipour A."/>
            <person name="Andersson J.O."/>
            <person name="Sicheritz-Ponten T."/>
            <person name="Alsmark U.C.M."/>
            <person name="Podowski R.M."/>
            <person name="Naeslund A.K."/>
            <person name="Eriksson A.-S."/>
            <person name="Winkler H.H."/>
            <person name="Kurland C.G."/>
        </authorList>
    </citation>
    <scope>NUCLEOTIDE SEQUENCE [LARGE SCALE GENOMIC DNA]</scope>
    <source>
        <strain>Madrid E</strain>
    </source>
</reference>